<keyword id="KW-0238">DNA-binding</keyword>
<keyword id="KW-0479">Metal-binding</keyword>
<keyword id="KW-0539">Nucleus</keyword>
<keyword id="KW-1185">Reference proteome</keyword>
<keyword id="KW-0677">Repeat</keyword>
<keyword id="KW-0804">Transcription</keyword>
<keyword id="KW-0805">Transcription regulation</keyword>
<keyword id="KW-0862">Zinc</keyword>
<keyword id="KW-0863">Zinc-finger</keyword>
<protein>
    <recommendedName>
        <fullName>Zinc finger protein 99</fullName>
    </recommendedName>
</protein>
<name>ZNF99_HUMAN</name>
<feature type="chain" id="PRO_0000429127" description="Zinc finger protein 99">
    <location>
        <begin position="1"/>
        <end position="864"/>
    </location>
</feature>
<feature type="domain" description="KRAB" evidence="2">
    <location>
        <begin position="4"/>
        <end position="75"/>
    </location>
</feature>
<feature type="zinc finger region" description="C2H2-type 1" evidence="1">
    <location>
        <begin position="173"/>
        <end position="195"/>
    </location>
</feature>
<feature type="zinc finger region" description="C2H2-type 2; degenerate" evidence="1">
    <location>
        <begin position="201"/>
        <end position="223"/>
    </location>
</feature>
<feature type="zinc finger region" description="C2H2-type 3; degenerate" evidence="1">
    <location>
        <begin position="229"/>
        <end position="251"/>
    </location>
</feature>
<feature type="zinc finger region" description="C2H2-type 4" evidence="1">
    <location>
        <begin position="257"/>
        <end position="279"/>
    </location>
</feature>
<feature type="zinc finger region" description="C2H2-type 5" evidence="1">
    <location>
        <begin position="285"/>
        <end position="307"/>
    </location>
</feature>
<feature type="zinc finger region" description="C2H2-type 6" evidence="1">
    <location>
        <begin position="313"/>
        <end position="335"/>
    </location>
</feature>
<feature type="zinc finger region" description="C2H2-type 7" evidence="1">
    <location>
        <begin position="341"/>
        <end position="363"/>
    </location>
</feature>
<feature type="zinc finger region" description="C2H2-type 8; degenerate" evidence="1">
    <location>
        <begin position="369"/>
        <end position="391"/>
    </location>
</feature>
<feature type="zinc finger region" description="C2H2-type 9" evidence="1">
    <location>
        <begin position="397"/>
        <end position="419"/>
    </location>
</feature>
<feature type="zinc finger region" description="C2H2-type 10" evidence="1">
    <location>
        <begin position="425"/>
        <end position="447"/>
    </location>
</feature>
<feature type="zinc finger region" description="C2H2-type 11" evidence="1">
    <location>
        <begin position="453"/>
        <end position="475"/>
    </location>
</feature>
<feature type="zinc finger region" description="C2H2-type 12" evidence="1">
    <location>
        <begin position="481"/>
        <end position="503"/>
    </location>
</feature>
<feature type="zinc finger region" description="C2H2-type 13" evidence="1">
    <location>
        <begin position="509"/>
        <end position="531"/>
    </location>
</feature>
<feature type="zinc finger region" description="C2H2-type 14" evidence="1">
    <location>
        <begin position="537"/>
        <end position="559"/>
    </location>
</feature>
<feature type="zinc finger region" description="C2H2-type 15" evidence="1">
    <location>
        <begin position="565"/>
        <end position="587"/>
    </location>
</feature>
<feature type="zinc finger region" description="C2H2-type 16" evidence="1">
    <location>
        <begin position="593"/>
        <end position="615"/>
    </location>
</feature>
<feature type="zinc finger region" description="C2H2-type 17" evidence="1">
    <location>
        <begin position="621"/>
        <end position="643"/>
    </location>
</feature>
<feature type="zinc finger region" description="C2H2-type 18" evidence="1">
    <location>
        <begin position="649"/>
        <end position="671"/>
    </location>
</feature>
<feature type="zinc finger region" description="C2H2-type 19" evidence="1">
    <location>
        <begin position="677"/>
        <end position="699"/>
    </location>
</feature>
<feature type="zinc finger region" description="C2H2-type 20" evidence="1">
    <location>
        <begin position="705"/>
        <end position="727"/>
    </location>
</feature>
<feature type="zinc finger region" description="C2H2-type 21" evidence="1">
    <location>
        <begin position="733"/>
        <end position="755"/>
    </location>
</feature>
<feature type="zinc finger region" description="C2H2-type 22" evidence="1">
    <location>
        <begin position="761"/>
        <end position="783"/>
    </location>
</feature>
<feature type="zinc finger region" description="C2H2-type 23" evidence="1">
    <location>
        <begin position="789"/>
        <end position="811"/>
    </location>
</feature>
<feature type="zinc finger region" description="C2H2-type 24" evidence="1">
    <location>
        <begin position="817"/>
        <end position="839"/>
    </location>
</feature>
<feature type="sequence variant" id="VAR_061935" description="In dbSNP:rs34726149.">
    <original>W</original>
    <variation>R</variation>
    <location>
        <position position="7"/>
    </location>
</feature>
<feature type="sequence variant" id="VAR_044501" description="In dbSNP:rs7255780.">
    <original>A</original>
    <variation>G</variation>
    <location>
        <position position="129"/>
    </location>
</feature>
<evidence type="ECO:0000255" key="1">
    <source>
        <dbReference type="PROSITE-ProRule" id="PRU00042"/>
    </source>
</evidence>
<evidence type="ECO:0000255" key="2">
    <source>
        <dbReference type="PROSITE-ProRule" id="PRU00119"/>
    </source>
</evidence>
<evidence type="ECO:0000305" key="3"/>
<proteinExistence type="evidence at transcript level"/>
<dbReference type="EMBL" id="AC008626">
    <property type="status" value="NOT_ANNOTATED_CDS"/>
    <property type="molecule type" value="Genomic_DNA"/>
</dbReference>
<dbReference type="CCDS" id="CCDS59369.1"/>
<dbReference type="RefSeq" id="NP_001073878.2">
    <property type="nucleotide sequence ID" value="NM_001080409.3"/>
</dbReference>
<dbReference type="SMR" id="A8MXY4"/>
<dbReference type="BioGRID" id="113467">
    <property type="interactions" value="6"/>
</dbReference>
<dbReference type="FunCoup" id="A8MXY4">
    <property type="interactions" value="2"/>
</dbReference>
<dbReference type="STRING" id="9606.ENSP00000472969"/>
<dbReference type="iPTMnet" id="A8MXY4"/>
<dbReference type="PhosphoSitePlus" id="A8MXY4"/>
<dbReference type="BioMuta" id="ZNF99"/>
<dbReference type="jPOST" id="A8MXY4"/>
<dbReference type="MassIVE" id="A8MXY4"/>
<dbReference type="PaxDb" id="9606-ENSP00000472969"/>
<dbReference type="PeptideAtlas" id="A8MXY4"/>
<dbReference type="ProteomicsDB" id="2362"/>
<dbReference type="Antibodypedia" id="56870">
    <property type="antibodies" value="54 antibodies from 9 providers"/>
</dbReference>
<dbReference type="DNASU" id="7652"/>
<dbReference type="Ensembl" id="ENST00000596209.4">
    <property type="protein sequence ID" value="ENSP00000472969.1"/>
    <property type="gene ID" value="ENSG00000213973.10"/>
</dbReference>
<dbReference type="GeneID" id="7652"/>
<dbReference type="KEGG" id="hsa:7652"/>
<dbReference type="MANE-Select" id="ENST00000596209.4">
    <property type="protein sequence ID" value="ENSP00000472969.1"/>
    <property type="RefSeq nucleotide sequence ID" value="NM_001080409.3"/>
    <property type="RefSeq protein sequence ID" value="NP_001073878.2"/>
</dbReference>
<dbReference type="UCSC" id="uc021urt.2">
    <property type="organism name" value="human"/>
</dbReference>
<dbReference type="AGR" id="HGNC:13175"/>
<dbReference type="CTD" id="7652"/>
<dbReference type="DisGeNET" id="7652"/>
<dbReference type="GeneCards" id="ZNF99"/>
<dbReference type="HGNC" id="HGNC:13175">
    <property type="gene designation" value="ZNF99"/>
</dbReference>
<dbReference type="HPA" id="ENSG00000213973">
    <property type="expression patterns" value="Tissue enriched (testis)"/>
</dbReference>
<dbReference type="MIM" id="603981">
    <property type="type" value="gene"/>
</dbReference>
<dbReference type="neXtProt" id="NX_A8MXY4"/>
<dbReference type="OpenTargets" id="ENSG00000213973"/>
<dbReference type="PharmGKB" id="PA37747"/>
<dbReference type="VEuPathDB" id="HostDB:ENSG00000213973"/>
<dbReference type="eggNOG" id="KOG1721">
    <property type="taxonomic scope" value="Eukaryota"/>
</dbReference>
<dbReference type="GeneTree" id="ENSGT00940000163381"/>
<dbReference type="InParanoid" id="A8MXY4"/>
<dbReference type="OMA" id="VIHMERN"/>
<dbReference type="OrthoDB" id="9411774at2759"/>
<dbReference type="PAN-GO" id="A8MXY4">
    <property type="GO annotations" value="4 GO annotations based on evolutionary models"/>
</dbReference>
<dbReference type="TreeFam" id="TF343410"/>
<dbReference type="PathwayCommons" id="A8MXY4"/>
<dbReference type="Reactome" id="R-HSA-212436">
    <property type="pathway name" value="Generic Transcription Pathway"/>
</dbReference>
<dbReference type="BioGRID-ORCS" id="7652">
    <property type="hits" value="14 hits in 1072 CRISPR screens"/>
</dbReference>
<dbReference type="GenomeRNAi" id="7652"/>
<dbReference type="Pharos" id="A8MXY4">
    <property type="development level" value="Tdark"/>
</dbReference>
<dbReference type="PRO" id="PR:A8MXY4"/>
<dbReference type="Proteomes" id="UP000005640">
    <property type="component" value="Chromosome 19"/>
</dbReference>
<dbReference type="RNAct" id="A8MXY4">
    <property type="molecule type" value="protein"/>
</dbReference>
<dbReference type="Bgee" id="ENSG00000213973">
    <property type="expression patterns" value="Expressed in primordial germ cell in gonad and 14 other cell types or tissues"/>
</dbReference>
<dbReference type="ExpressionAtlas" id="A8MXY4">
    <property type="expression patterns" value="baseline and differential"/>
</dbReference>
<dbReference type="GO" id="GO:0005634">
    <property type="term" value="C:nucleus"/>
    <property type="evidence" value="ECO:0000318"/>
    <property type="project" value="GO_Central"/>
</dbReference>
<dbReference type="GO" id="GO:0003677">
    <property type="term" value="F:DNA binding"/>
    <property type="evidence" value="ECO:0007669"/>
    <property type="project" value="UniProtKB-KW"/>
</dbReference>
<dbReference type="GO" id="GO:0008270">
    <property type="term" value="F:zinc ion binding"/>
    <property type="evidence" value="ECO:0007669"/>
    <property type="project" value="UniProtKB-KW"/>
</dbReference>
<dbReference type="GO" id="GO:0006357">
    <property type="term" value="P:regulation of transcription by RNA polymerase II"/>
    <property type="evidence" value="ECO:0000318"/>
    <property type="project" value="GO_Central"/>
</dbReference>
<dbReference type="CDD" id="cd07765">
    <property type="entry name" value="KRAB_A-box"/>
    <property type="match status" value="1"/>
</dbReference>
<dbReference type="FunFam" id="3.30.160.60:FF:003723">
    <property type="match status" value="1"/>
</dbReference>
<dbReference type="FunFam" id="3.30.160.60:FF:001737">
    <property type="entry name" value="Zinc finger protein 100"/>
    <property type="match status" value="1"/>
</dbReference>
<dbReference type="FunFam" id="3.30.160.60:FF:000005">
    <property type="entry name" value="Zinc finger protein 14 homolog"/>
    <property type="match status" value="2"/>
</dbReference>
<dbReference type="FunFam" id="3.30.160.60:FF:000524">
    <property type="entry name" value="Zinc finger protein 155"/>
    <property type="match status" value="2"/>
</dbReference>
<dbReference type="FunFam" id="3.30.160.60:FF:000374">
    <property type="entry name" value="Zinc finger protein 208"/>
    <property type="match status" value="9"/>
</dbReference>
<dbReference type="FunFam" id="3.30.160.60:FF:000034">
    <property type="entry name" value="zinc finger protein 25"/>
    <property type="match status" value="1"/>
</dbReference>
<dbReference type="FunFam" id="3.30.160.60:FF:001868">
    <property type="entry name" value="Zinc finger protein 264"/>
    <property type="match status" value="2"/>
</dbReference>
<dbReference type="FunFam" id="3.30.160.60:FF:000120">
    <property type="entry name" value="Zinc finger protein 430"/>
    <property type="match status" value="2"/>
</dbReference>
<dbReference type="FunFam" id="3.30.160.60:FF:002448">
    <property type="entry name" value="Zinc finger protein 430"/>
    <property type="match status" value="1"/>
</dbReference>
<dbReference type="FunFam" id="3.30.160.60:FF:000362">
    <property type="entry name" value="Zinc finger protein 606"/>
    <property type="match status" value="2"/>
</dbReference>
<dbReference type="FunFam" id="3.30.160.60:FF:000307">
    <property type="entry name" value="Zinc finger protein ZFP69 isoform 1"/>
    <property type="match status" value="1"/>
</dbReference>
<dbReference type="Gene3D" id="6.10.140.140">
    <property type="match status" value="1"/>
</dbReference>
<dbReference type="Gene3D" id="3.30.160.60">
    <property type="entry name" value="Classic Zinc Finger"/>
    <property type="match status" value="24"/>
</dbReference>
<dbReference type="InterPro" id="IPR001909">
    <property type="entry name" value="KRAB"/>
</dbReference>
<dbReference type="InterPro" id="IPR036051">
    <property type="entry name" value="KRAB_dom_sf"/>
</dbReference>
<dbReference type="InterPro" id="IPR036236">
    <property type="entry name" value="Znf_C2H2_sf"/>
</dbReference>
<dbReference type="InterPro" id="IPR013087">
    <property type="entry name" value="Znf_C2H2_type"/>
</dbReference>
<dbReference type="PANTHER" id="PTHR23235:SF178">
    <property type="entry name" value="C2H2-TYPE DOMAIN-CONTAINING PROTEIN-RELATED"/>
    <property type="match status" value="1"/>
</dbReference>
<dbReference type="PANTHER" id="PTHR23235">
    <property type="entry name" value="KRUEPPEL-LIKE TRANSCRIPTION FACTOR"/>
    <property type="match status" value="1"/>
</dbReference>
<dbReference type="Pfam" id="PF01352">
    <property type="entry name" value="KRAB"/>
    <property type="match status" value="1"/>
</dbReference>
<dbReference type="Pfam" id="PF00096">
    <property type="entry name" value="zf-C2H2"/>
    <property type="match status" value="20"/>
</dbReference>
<dbReference type="SMART" id="SM00349">
    <property type="entry name" value="KRAB"/>
    <property type="match status" value="1"/>
</dbReference>
<dbReference type="SMART" id="SM00355">
    <property type="entry name" value="ZnF_C2H2"/>
    <property type="match status" value="23"/>
</dbReference>
<dbReference type="SUPFAM" id="SSF57667">
    <property type="entry name" value="beta-beta-alpha zinc fingers"/>
    <property type="match status" value="13"/>
</dbReference>
<dbReference type="SUPFAM" id="SSF109640">
    <property type="entry name" value="KRAB domain (Kruppel-associated box)"/>
    <property type="match status" value="1"/>
</dbReference>
<dbReference type="PROSITE" id="PS50805">
    <property type="entry name" value="KRAB"/>
    <property type="match status" value="1"/>
</dbReference>
<dbReference type="PROSITE" id="PS00028">
    <property type="entry name" value="ZINC_FINGER_C2H2_1"/>
    <property type="match status" value="21"/>
</dbReference>
<dbReference type="PROSITE" id="PS50157">
    <property type="entry name" value="ZINC_FINGER_C2H2_2"/>
    <property type="match status" value="24"/>
</dbReference>
<sequence>MGSLTFWDVTIEFALEEWQCLDMAQQNLYRNVMLENYRNLVFLGIAVSKLDLITCLKQGKEPWNMKRHEMVTKPPVISSHFTQDFWPDQSIKDSFQEIILRTYARCGHKNLRLRKDCESVNEGKMHEEAYNKLNQCWTTTQGKIFQCNKYVKVFHKYSNSNRYKIRHTKKKTFKCMKCSKSFFMLSHLIQHKRIHTRENIYKCEERGKAFKWFSTLIKHKIIHTEDKPYKYKKCGKAFNISSMFTKCKIIHTGKKPCKCEECGKVFNNSSTLMKHKIIHTGKKPYKCEECGKAFKQSSHLTRHKAIHTGEKPYKCEECGKAFNHFSALRKHQIIHTGKKPYKCEECGKAFSQSSTLRKHEIIHTEEKPYKYEECGKAFSNLSALRKHEIIHTGQKPYKCEECGKAFKWSSKLTVHKVIHTAEKPCKCEECGKAFKRFSALRKHKIIHTGKQPYKCEECSKAFSNFSALRKHEIIHTGEKPYKCEECGKAFKWSSKLTVHKVIHMEEKPCKCEECGKAFKHFSALRKHKIIHTGKKPYKCEECGKAFNNSSTLMKHKIIHTGKKPYKCEECGKAFKQSSHLTRHKAIHTGEKPYKCEECGKAFNHFSALRKHQIIHTGKKPYKCEECGKAFSQSSTLRKHEIIHTGEKPYKCEECGKAFKWSSHLTRHKVIHTEEKPYKCEECGKAFNHFSALRKHKIIHTGKKPYKCEECGKAFSQSSTLRKHEIIHTGEKPYKCEECGKAFKWSSKLTVHKVIHTAEKPCKCEECGKAFKHFSALRKHKIIHTGKKPYKCEECGKAFNNSSTLRKHEIIHTGEKSYKCEECGKAFQWSSKLTLHKVIHMERNPANVKNVAKLLNISQPLENMR</sequence>
<gene>
    <name type="primary">ZNF99</name>
    <name type="synonym">C19orf9</name>
</gene>
<organism>
    <name type="scientific">Homo sapiens</name>
    <name type="common">Human</name>
    <dbReference type="NCBI Taxonomy" id="9606"/>
    <lineage>
        <taxon>Eukaryota</taxon>
        <taxon>Metazoa</taxon>
        <taxon>Chordata</taxon>
        <taxon>Craniata</taxon>
        <taxon>Vertebrata</taxon>
        <taxon>Euteleostomi</taxon>
        <taxon>Mammalia</taxon>
        <taxon>Eutheria</taxon>
        <taxon>Euarchontoglires</taxon>
        <taxon>Primates</taxon>
        <taxon>Haplorrhini</taxon>
        <taxon>Catarrhini</taxon>
        <taxon>Hominidae</taxon>
        <taxon>Homo</taxon>
    </lineage>
</organism>
<accession>A8MXY4</accession>
<accession>M0R335</accession>
<comment type="function">
    <text>May be involved in transcriptional regulation.</text>
</comment>
<comment type="subcellular location">
    <subcellularLocation>
        <location evidence="3">Nucleus</location>
    </subcellularLocation>
</comment>
<comment type="similarity">
    <text evidence="3">Belongs to the krueppel C2H2-type zinc-finger protein family.</text>
</comment>
<reference key="1">
    <citation type="journal article" date="2004" name="Nature">
        <title>The DNA sequence and biology of human chromosome 19.</title>
        <authorList>
            <person name="Grimwood J."/>
            <person name="Gordon L.A."/>
            <person name="Olsen A.S."/>
            <person name="Terry A."/>
            <person name="Schmutz J."/>
            <person name="Lamerdin J.E."/>
            <person name="Hellsten U."/>
            <person name="Goodstein D."/>
            <person name="Couronne O."/>
            <person name="Tran-Gyamfi M."/>
            <person name="Aerts A."/>
            <person name="Altherr M."/>
            <person name="Ashworth L."/>
            <person name="Bajorek E."/>
            <person name="Black S."/>
            <person name="Branscomb E."/>
            <person name="Caenepeel S."/>
            <person name="Carrano A.V."/>
            <person name="Caoile C."/>
            <person name="Chan Y.M."/>
            <person name="Christensen M."/>
            <person name="Cleland C.A."/>
            <person name="Copeland A."/>
            <person name="Dalin E."/>
            <person name="Dehal P."/>
            <person name="Denys M."/>
            <person name="Detter J.C."/>
            <person name="Escobar J."/>
            <person name="Flowers D."/>
            <person name="Fotopulos D."/>
            <person name="Garcia C."/>
            <person name="Georgescu A.M."/>
            <person name="Glavina T."/>
            <person name="Gomez M."/>
            <person name="Gonzales E."/>
            <person name="Groza M."/>
            <person name="Hammon N."/>
            <person name="Hawkins T."/>
            <person name="Haydu L."/>
            <person name="Ho I."/>
            <person name="Huang W."/>
            <person name="Israni S."/>
            <person name="Jett J."/>
            <person name="Kadner K."/>
            <person name="Kimball H."/>
            <person name="Kobayashi A."/>
            <person name="Larionov V."/>
            <person name="Leem S.-H."/>
            <person name="Lopez F."/>
            <person name="Lou Y."/>
            <person name="Lowry S."/>
            <person name="Malfatti S."/>
            <person name="Martinez D."/>
            <person name="McCready P.M."/>
            <person name="Medina C."/>
            <person name="Morgan J."/>
            <person name="Nelson K."/>
            <person name="Nolan M."/>
            <person name="Ovcharenko I."/>
            <person name="Pitluck S."/>
            <person name="Pollard M."/>
            <person name="Popkie A.P."/>
            <person name="Predki P."/>
            <person name="Quan G."/>
            <person name="Ramirez L."/>
            <person name="Rash S."/>
            <person name="Retterer J."/>
            <person name="Rodriguez A."/>
            <person name="Rogers S."/>
            <person name="Salamov A."/>
            <person name="Salazar A."/>
            <person name="She X."/>
            <person name="Smith D."/>
            <person name="Slezak T."/>
            <person name="Solovyev V."/>
            <person name="Thayer N."/>
            <person name="Tice H."/>
            <person name="Tsai M."/>
            <person name="Ustaszewska A."/>
            <person name="Vo N."/>
            <person name="Wagner M."/>
            <person name="Wheeler J."/>
            <person name="Wu K."/>
            <person name="Xie G."/>
            <person name="Yang J."/>
            <person name="Dubchak I."/>
            <person name="Furey T.S."/>
            <person name="DeJong P."/>
            <person name="Dickson M."/>
            <person name="Gordon D."/>
            <person name="Eichler E.E."/>
            <person name="Pennacchio L.A."/>
            <person name="Richardson P."/>
            <person name="Stubbs L."/>
            <person name="Rokhsar D.S."/>
            <person name="Myers R.M."/>
            <person name="Rubin E.M."/>
            <person name="Lucas S.M."/>
        </authorList>
    </citation>
    <scope>NUCLEOTIDE SEQUENCE [LARGE SCALE GENOMIC DNA]</scope>
</reference>
<reference key="2">
    <citation type="journal article" date="1993" name="EMBO J.">
        <title>Clustered organization of homologous KRAB zinc-finger genes with enhanced expression in human T lymphoid cells.</title>
        <authorList>
            <person name="Bellefroid E.J."/>
            <person name="Marine J.-C."/>
            <person name="Ried T."/>
            <person name="Lecocq P.J."/>
            <person name="Riviere M."/>
            <person name="Amemiya C.T."/>
            <person name="Poncelet D.A."/>
            <person name="Coulie P.G."/>
            <person name="de Jong P.J."/>
            <person name="Szpirer C."/>
            <person name="Ward D.C."/>
            <person name="Martial J.A."/>
        </authorList>
    </citation>
    <scope>NUCLEOTIDE SEQUENCE [MRNA] OF 90-154</scope>
</reference>